<keyword id="KW-0150">Chloroplast</keyword>
<keyword id="KW-0249">Electron transport</keyword>
<keyword id="KW-0349">Heme</keyword>
<keyword id="KW-0408">Iron</keyword>
<keyword id="KW-0472">Membrane</keyword>
<keyword id="KW-0479">Metal-binding</keyword>
<keyword id="KW-0602">Photosynthesis</keyword>
<keyword id="KW-0934">Plastid</keyword>
<keyword id="KW-0732">Signal</keyword>
<keyword id="KW-0793">Thylakoid</keyword>
<keyword id="KW-0812">Transmembrane</keyword>
<keyword id="KW-1133">Transmembrane helix</keyword>
<keyword id="KW-0813">Transport</keyword>
<gene>
    <name type="primary">petA</name>
    <name type="ORF">PA074</name>
</gene>
<reference key="1">
    <citation type="journal article" date="2004" name="Plant Physiol.">
        <title>A comparison of rice chloroplast genomes.</title>
        <authorList>
            <person name="Tang J."/>
            <person name="Xia H."/>
            <person name="Cao M."/>
            <person name="Zhang X."/>
            <person name="Zeng W."/>
            <person name="Hu S."/>
            <person name="Tong W."/>
            <person name="Wang J."/>
            <person name="Wang J."/>
            <person name="Yu J."/>
            <person name="Yang H."/>
            <person name="Zhu L."/>
        </authorList>
    </citation>
    <scope>NUCLEOTIDE SEQUENCE [LARGE SCALE GENOMIC DNA]</scope>
    <source>
        <strain>cv. PA64s</strain>
    </source>
</reference>
<feature type="signal peptide" evidence="1">
    <location>
        <begin position="1"/>
        <end position="35"/>
    </location>
</feature>
<feature type="chain" id="PRO_0000023826" description="Cytochrome f">
    <location>
        <begin position="36"/>
        <end position="320"/>
    </location>
</feature>
<feature type="transmembrane region" description="Helical" evidence="2">
    <location>
        <begin position="286"/>
        <end position="305"/>
    </location>
</feature>
<feature type="binding site" description="axial binding residue" evidence="1">
    <location>
        <position position="36"/>
    </location>
    <ligand>
        <name>heme</name>
        <dbReference type="ChEBI" id="CHEBI:30413"/>
    </ligand>
    <ligandPart>
        <name>Fe</name>
        <dbReference type="ChEBI" id="CHEBI:18248"/>
    </ligandPart>
</feature>
<feature type="binding site" description="covalent" evidence="1">
    <location>
        <position position="56"/>
    </location>
    <ligand>
        <name>heme</name>
        <dbReference type="ChEBI" id="CHEBI:30413"/>
    </ligand>
</feature>
<feature type="binding site" description="covalent" evidence="1">
    <location>
        <position position="59"/>
    </location>
    <ligand>
        <name>heme</name>
        <dbReference type="ChEBI" id="CHEBI:30413"/>
    </ligand>
</feature>
<feature type="binding site" description="axial binding residue" evidence="1">
    <location>
        <position position="60"/>
    </location>
    <ligand>
        <name>heme</name>
        <dbReference type="ChEBI" id="CHEBI:30413"/>
    </ligand>
    <ligandPart>
        <name>Fe</name>
        <dbReference type="ChEBI" id="CHEBI:18248"/>
    </ligandPart>
</feature>
<accession>P0C387</accession>
<accession>P07888</accession>
<accession>Q6QXT8</accession>
<accession>Q6QY65</accession>
<geneLocation type="chloroplast"/>
<evidence type="ECO:0000250" key="1"/>
<evidence type="ECO:0000255" key="2"/>
<evidence type="ECO:0000305" key="3"/>
<dbReference type="EMBL" id="AY522331">
    <property type="protein sequence ID" value="AAS46193.1"/>
    <property type="status" value="ALT_INIT"/>
    <property type="molecule type" value="Genomic_DNA"/>
</dbReference>
<dbReference type="RefSeq" id="YP_009305317.1">
    <property type="nucleotide sequence ID" value="NC_031333.1"/>
</dbReference>
<dbReference type="SMR" id="P0C387"/>
<dbReference type="GeneID" id="29141383"/>
<dbReference type="GO" id="GO:0009535">
    <property type="term" value="C:chloroplast thylakoid membrane"/>
    <property type="evidence" value="ECO:0007669"/>
    <property type="project" value="UniProtKB-SubCell"/>
</dbReference>
<dbReference type="GO" id="GO:0009536">
    <property type="term" value="C:plastid"/>
    <property type="evidence" value="ECO:0000305"/>
    <property type="project" value="Gramene"/>
</dbReference>
<dbReference type="GO" id="GO:0009055">
    <property type="term" value="F:electron transfer activity"/>
    <property type="evidence" value="ECO:0007669"/>
    <property type="project" value="UniProtKB-UniRule"/>
</dbReference>
<dbReference type="GO" id="GO:0020037">
    <property type="term" value="F:heme binding"/>
    <property type="evidence" value="ECO:0007669"/>
    <property type="project" value="InterPro"/>
</dbReference>
<dbReference type="GO" id="GO:0005506">
    <property type="term" value="F:iron ion binding"/>
    <property type="evidence" value="ECO:0007669"/>
    <property type="project" value="InterPro"/>
</dbReference>
<dbReference type="GO" id="GO:0015979">
    <property type="term" value="P:photosynthesis"/>
    <property type="evidence" value="ECO:0007669"/>
    <property type="project" value="UniProtKB-UniRule"/>
</dbReference>
<dbReference type="FunFam" id="1.20.5.700:FF:000001">
    <property type="entry name" value="Cytochrome f"/>
    <property type="match status" value="1"/>
</dbReference>
<dbReference type="FunFam" id="2.40.50.100:FF:000007">
    <property type="entry name" value="Cytochrome f"/>
    <property type="match status" value="1"/>
</dbReference>
<dbReference type="FunFam" id="2.60.40.830:FF:000001">
    <property type="entry name" value="Cytochrome f"/>
    <property type="match status" value="1"/>
</dbReference>
<dbReference type="Gene3D" id="2.40.50.100">
    <property type="match status" value="1"/>
</dbReference>
<dbReference type="Gene3D" id="2.60.40.830">
    <property type="entry name" value="Cytochrome f large domain"/>
    <property type="match status" value="1"/>
</dbReference>
<dbReference type="Gene3D" id="1.20.5.700">
    <property type="entry name" value="Single helix bin"/>
    <property type="match status" value="1"/>
</dbReference>
<dbReference type="HAMAP" id="MF_00610">
    <property type="entry name" value="Cytb6_f_cytF"/>
    <property type="match status" value="1"/>
</dbReference>
<dbReference type="InterPro" id="IPR024058">
    <property type="entry name" value="Cyt-f_TM"/>
</dbReference>
<dbReference type="InterPro" id="IPR002325">
    <property type="entry name" value="Cyt_f"/>
</dbReference>
<dbReference type="InterPro" id="IPR024094">
    <property type="entry name" value="Cyt_f_lg_dom"/>
</dbReference>
<dbReference type="InterPro" id="IPR036826">
    <property type="entry name" value="Cyt_f_lg_dom_sf"/>
</dbReference>
<dbReference type="InterPro" id="IPR011054">
    <property type="entry name" value="Rudment_hybrid_motif"/>
</dbReference>
<dbReference type="PANTHER" id="PTHR33288">
    <property type="match status" value="1"/>
</dbReference>
<dbReference type="PANTHER" id="PTHR33288:SF10">
    <property type="entry name" value="CYTOCHROME F"/>
    <property type="match status" value="1"/>
</dbReference>
<dbReference type="Pfam" id="PF01333">
    <property type="entry name" value="Apocytochr_F_C"/>
    <property type="match status" value="1"/>
</dbReference>
<dbReference type="Pfam" id="PF16639">
    <property type="entry name" value="Apocytochr_F_N"/>
    <property type="match status" value="1"/>
</dbReference>
<dbReference type="PRINTS" id="PR00610">
    <property type="entry name" value="CYTOCHROMEF"/>
</dbReference>
<dbReference type="SUPFAM" id="SSF103431">
    <property type="entry name" value="Cytochrome f subunit of the cytochrome b6f complex, transmembrane anchor"/>
    <property type="match status" value="1"/>
</dbReference>
<dbReference type="SUPFAM" id="SSF49441">
    <property type="entry name" value="Cytochrome f, large domain"/>
    <property type="match status" value="1"/>
</dbReference>
<dbReference type="SUPFAM" id="SSF51246">
    <property type="entry name" value="Rudiment single hybrid motif"/>
    <property type="match status" value="1"/>
</dbReference>
<dbReference type="PROSITE" id="PS51010">
    <property type="entry name" value="CYTF"/>
    <property type="match status" value="1"/>
</dbReference>
<name>CYF_ORYSA</name>
<sequence>MENRNTFSWVKEQMTRSISVSIMIYVITRTSISNAYPIFAQQGYENPREATGRIVCANCHLANKPVDIEVPQAVLPDTVFEAVLRIPYDMQLKQVLANGKKGGLNVGAVLILPEGFELAPPDRISPELKEKIGNLSFQSYRPNKKNILVIGPVPGKKYSEIVFPILSPDPAMKKDVHFLKYPIYVGGNRGRGQIYPDGSKSNNTVYNATSTGVVRKILRKEKGGYEISIVDASDGRQVIDLIPPGPELLVSEGESIKLDQPLTSNPNVGGFGQGDAEIVLQDPLRVQGLLFFFASVILAQVFLVLKKKQFEKVQLYEMNF</sequence>
<organism>
    <name type="scientific">Oryza sativa</name>
    <name type="common">Rice</name>
    <dbReference type="NCBI Taxonomy" id="4530"/>
    <lineage>
        <taxon>Eukaryota</taxon>
        <taxon>Viridiplantae</taxon>
        <taxon>Streptophyta</taxon>
        <taxon>Embryophyta</taxon>
        <taxon>Tracheophyta</taxon>
        <taxon>Spermatophyta</taxon>
        <taxon>Magnoliopsida</taxon>
        <taxon>Liliopsida</taxon>
        <taxon>Poales</taxon>
        <taxon>Poaceae</taxon>
        <taxon>BOP clade</taxon>
        <taxon>Oryzoideae</taxon>
        <taxon>Oryzeae</taxon>
        <taxon>Oryzinae</taxon>
        <taxon>Oryza</taxon>
    </lineage>
</organism>
<proteinExistence type="inferred from homology"/>
<protein>
    <recommendedName>
        <fullName>Cytochrome f</fullName>
    </recommendedName>
</protein>
<comment type="function">
    <text evidence="1">Component of the cytochrome b6-f complex, which mediates electron transfer between photosystem II (PSII) and photosystem I (PSI), cyclic electron flow around PSI, and state transitions.</text>
</comment>
<comment type="cofactor">
    <cofactor evidence="1">
        <name>heme</name>
        <dbReference type="ChEBI" id="CHEBI:30413"/>
    </cofactor>
    <text evidence="1">Binds 1 heme group covalently.</text>
</comment>
<comment type="subunit">
    <text evidence="1">The 4 large subunits of the cytochrome b6-f complex are cytochrome b6, subunit IV (17 kDa polypeptide, petD), cytochrome f and the Rieske protein, while the 4 small subunits are PetG, PetL, PetM and PetN. The complex functions as a dimer (By similarity).</text>
</comment>
<comment type="subcellular location">
    <subcellularLocation>
        <location evidence="1">Plastid</location>
        <location evidence="1">Chloroplast thylakoid membrane</location>
        <topology evidence="1">Single-pass membrane protein</topology>
    </subcellularLocation>
</comment>
<comment type="similarity">
    <text evidence="3">Belongs to the cytochrome f family.</text>
</comment>
<comment type="sequence caution" evidence="3">
    <conflict type="erroneous initiation">
        <sequence resource="EMBL-CDS" id="AAS46193"/>
    </conflict>
</comment>